<gene>
    <name evidence="1" type="primary">eif-3.F</name>
    <name type="ORF">D2013.7</name>
</gene>
<proteinExistence type="inferred from homology"/>
<accession>Q18967</accession>
<name>EIF3F_CAEEL</name>
<reference key="1">
    <citation type="journal article" date="1998" name="Science">
        <title>Genome sequence of the nematode C. elegans: a platform for investigating biology.</title>
        <authorList>
            <consortium name="The C. elegans sequencing consortium"/>
        </authorList>
    </citation>
    <scope>NUCLEOTIDE SEQUENCE [LARGE SCALE GENOMIC DNA]</scope>
    <source>
        <strain>Bristol N2</strain>
    </source>
</reference>
<reference key="2">
    <citation type="journal article" date="2007" name="PLoS Genet.">
        <title>Lifespan regulation by evolutionarily conserved genes essential for viability.</title>
        <authorList>
            <person name="Curran S.P."/>
            <person name="Ruvkun G."/>
        </authorList>
    </citation>
    <scope>DISRUPTION PHENOTYPE</scope>
</reference>
<feature type="chain" id="PRO_0000364292" description="Eukaryotic translation initiation factor 3 subunit F">
    <location>
        <begin position="1"/>
        <end position="294"/>
    </location>
</feature>
<feature type="domain" description="MPN" evidence="2">
    <location>
        <begin position="7"/>
        <end position="155"/>
    </location>
</feature>
<protein>
    <recommendedName>
        <fullName evidence="1">Eukaryotic translation initiation factor 3 subunit F</fullName>
        <shortName evidence="1">eIF3f</shortName>
    </recommendedName>
    <alternativeName>
        <fullName evidence="1">Eukaryotic translation initiation factor 3 subunit 5</fullName>
    </alternativeName>
</protein>
<dbReference type="EMBL" id="Z47808">
    <property type="protein sequence ID" value="CAA87773.1"/>
    <property type="molecule type" value="Genomic_DNA"/>
</dbReference>
<dbReference type="PIR" id="T20338">
    <property type="entry name" value="T20338"/>
</dbReference>
<dbReference type="RefSeq" id="NP_495988.1">
    <property type="nucleotide sequence ID" value="NM_063587.7"/>
</dbReference>
<dbReference type="SMR" id="Q18967"/>
<dbReference type="BioGRID" id="39802">
    <property type="interactions" value="25"/>
</dbReference>
<dbReference type="DIP" id="DIP-25689N"/>
<dbReference type="FunCoup" id="Q18967">
    <property type="interactions" value="3020"/>
</dbReference>
<dbReference type="IntAct" id="Q18967">
    <property type="interactions" value="1"/>
</dbReference>
<dbReference type="STRING" id="6239.D2013.7.1"/>
<dbReference type="PaxDb" id="6239-D2013.7"/>
<dbReference type="PeptideAtlas" id="Q18967"/>
<dbReference type="EnsemblMetazoa" id="D2013.7.1">
    <property type="protein sequence ID" value="D2013.7.1"/>
    <property type="gene ID" value="WBGene00001229"/>
</dbReference>
<dbReference type="GeneID" id="174478"/>
<dbReference type="KEGG" id="cel:CELE_D2013.7"/>
<dbReference type="UCSC" id="D2013.7">
    <property type="organism name" value="c. elegans"/>
</dbReference>
<dbReference type="AGR" id="WB:WBGene00001229"/>
<dbReference type="CTD" id="174478"/>
<dbReference type="WormBase" id="D2013.7">
    <property type="protein sequence ID" value="CE00932"/>
    <property type="gene ID" value="WBGene00001229"/>
    <property type="gene designation" value="eif-3.F"/>
</dbReference>
<dbReference type="eggNOG" id="KOG2975">
    <property type="taxonomic scope" value="Eukaryota"/>
</dbReference>
<dbReference type="GeneTree" id="ENSGT00950000183073"/>
<dbReference type="HOGENOM" id="CLU_027018_0_1_1"/>
<dbReference type="InParanoid" id="Q18967"/>
<dbReference type="OMA" id="EYFVHFH"/>
<dbReference type="OrthoDB" id="25498at2759"/>
<dbReference type="PhylomeDB" id="Q18967"/>
<dbReference type="Reactome" id="R-CEL-156827">
    <property type="pathway name" value="L13a-mediated translational silencing of Ceruloplasmin expression"/>
</dbReference>
<dbReference type="Reactome" id="R-CEL-72649">
    <property type="pathway name" value="Translation initiation complex formation"/>
</dbReference>
<dbReference type="Reactome" id="R-CEL-72689">
    <property type="pathway name" value="Formation of a pool of free 40S subunits"/>
</dbReference>
<dbReference type="Reactome" id="R-CEL-72695">
    <property type="pathway name" value="Formation of the ternary complex, and subsequently, the 43S complex"/>
</dbReference>
<dbReference type="Reactome" id="R-CEL-72702">
    <property type="pathway name" value="Ribosomal scanning and start codon recognition"/>
</dbReference>
<dbReference type="PRO" id="PR:Q18967"/>
<dbReference type="Proteomes" id="UP000001940">
    <property type="component" value="Chromosome II"/>
</dbReference>
<dbReference type="Bgee" id="WBGene00001229">
    <property type="expression patterns" value="Expressed in larva and 4 other cell types or tissues"/>
</dbReference>
<dbReference type="GO" id="GO:0016282">
    <property type="term" value="C:eukaryotic 43S preinitiation complex"/>
    <property type="evidence" value="ECO:0007669"/>
    <property type="project" value="UniProtKB-UniRule"/>
</dbReference>
<dbReference type="GO" id="GO:0033290">
    <property type="term" value="C:eukaryotic 48S preinitiation complex"/>
    <property type="evidence" value="ECO:0007669"/>
    <property type="project" value="UniProtKB-UniRule"/>
</dbReference>
<dbReference type="GO" id="GO:0071541">
    <property type="term" value="C:eukaryotic translation initiation factor 3 complex, eIF3m"/>
    <property type="evidence" value="ECO:0000318"/>
    <property type="project" value="GO_Central"/>
</dbReference>
<dbReference type="GO" id="GO:0008237">
    <property type="term" value="F:metallopeptidase activity"/>
    <property type="evidence" value="ECO:0007669"/>
    <property type="project" value="InterPro"/>
</dbReference>
<dbReference type="GO" id="GO:0003743">
    <property type="term" value="F:translation initiation factor activity"/>
    <property type="evidence" value="ECO:0007669"/>
    <property type="project" value="UniProtKB-UniRule"/>
</dbReference>
<dbReference type="GO" id="GO:0031369">
    <property type="term" value="F:translation initiation factor binding"/>
    <property type="evidence" value="ECO:0000318"/>
    <property type="project" value="GO_Central"/>
</dbReference>
<dbReference type="GO" id="GO:0001732">
    <property type="term" value="P:formation of cytoplasmic translation initiation complex"/>
    <property type="evidence" value="ECO:0007669"/>
    <property type="project" value="UniProtKB-UniRule"/>
</dbReference>
<dbReference type="GO" id="GO:0006412">
    <property type="term" value="P:translation"/>
    <property type="evidence" value="ECO:0000315"/>
    <property type="project" value="UniProtKB"/>
</dbReference>
<dbReference type="GO" id="GO:0006413">
    <property type="term" value="P:translational initiation"/>
    <property type="evidence" value="ECO:0000318"/>
    <property type="project" value="GO_Central"/>
</dbReference>
<dbReference type="CDD" id="cd08064">
    <property type="entry name" value="MPN_eIF3f"/>
    <property type="match status" value="1"/>
</dbReference>
<dbReference type="FunFam" id="3.40.140.10:FF:000089">
    <property type="entry name" value="Eukaryotic translation initiation factor 3 subunit F"/>
    <property type="match status" value="1"/>
</dbReference>
<dbReference type="Gene3D" id="3.40.140.10">
    <property type="entry name" value="Cytidine Deaminase, domain 2"/>
    <property type="match status" value="1"/>
</dbReference>
<dbReference type="HAMAP" id="MF_03005">
    <property type="entry name" value="eIF3f"/>
    <property type="match status" value="1"/>
</dbReference>
<dbReference type="InterPro" id="IPR027531">
    <property type="entry name" value="eIF3f"/>
</dbReference>
<dbReference type="InterPro" id="IPR024969">
    <property type="entry name" value="EIF3F/CSN6-like_C"/>
</dbReference>
<dbReference type="InterPro" id="IPR000555">
    <property type="entry name" value="JAMM/MPN+_dom"/>
</dbReference>
<dbReference type="InterPro" id="IPR037518">
    <property type="entry name" value="MPN"/>
</dbReference>
<dbReference type="PANTHER" id="PTHR10540:SF6">
    <property type="entry name" value="EUKARYOTIC TRANSLATION INITIATION FACTOR 3 SUBUNIT F"/>
    <property type="match status" value="1"/>
</dbReference>
<dbReference type="PANTHER" id="PTHR10540">
    <property type="entry name" value="EUKARYOTIC TRANSLATION INITIATION FACTOR 3 SUBUNIT F-RELATED"/>
    <property type="match status" value="1"/>
</dbReference>
<dbReference type="Pfam" id="PF01398">
    <property type="entry name" value="JAB"/>
    <property type="match status" value="1"/>
</dbReference>
<dbReference type="Pfam" id="PF13012">
    <property type="entry name" value="MitMem_reg"/>
    <property type="match status" value="1"/>
</dbReference>
<dbReference type="SMART" id="SM00232">
    <property type="entry name" value="JAB_MPN"/>
    <property type="match status" value="1"/>
</dbReference>
<dbReference type="PROSITE" id="PS50249">
    <property type="entry name" value="MPN"/>
    <property type="match status" value="1"/>
</dbReference>
<organism>
    <name type="scientific">Caenorhabditis elegans</name>
    <dbReference type="NCBI Taxonomy" id="6239"/>
    <lineage>
        <taxon>Eukaryota</taxon>
        <taxon>Metazoa</taxon>
        <taxon>Ecdysozoa</taxon>
        <taxon>Nematoda</taxon>
        <taxon>Chromadorea</taxon>
        <taxon>Rhabditida</taxon>
        <taxon>Rhabditina</taxon>
        <taxon>Rhabditomorpha</taxon>
        <taxon>Rhabditoidea</taxon>
        <taxon>Rhabditidae</taxon>
        <taxon>Peloderinae</taxon>
        <taxon>Caenorhabditis</taxon>
    </lineage>
</organism>
<sequence>MASNLTVNVHPGVYMNVVDTHMRRTKSSAKNTGQEKCMGTLMGYYEKGSIQVTNCFAIPFNESNDDLEIDDQFNQQMISALKKTSPNEQPVGWFLTTSDITSSCLIYHDYYVRVITEASARRESPPIVVLTIDTTFSGDMSKRMPVRAYLRSKAGIPGAAGPHCAIFNPLRVELAAFPGELVAMQLIEKALDSRRREATLESGLEQLETSTAQMIEWLERMLHYVEDVNKNGEKPGDAQIGRQLMDIVTASSNNMQPEKLDTLVKNTLRDYVMVSYLAKLTQTQLQVHERLVSA</sequence>
<comment type="function">
    <text evidence="1">Component of the eukaryotic translation initiation factor 3 (eIF-3) complex, which is involved in protein synthesis of a specialized repertoire of mRNAs and, together with other initiation factors, stimulates binding of mRNA and methionyl-tRNAi to the 40S ribosome. The eIF-3 complex specifically targets and initiates translation of a subset of mRNAs involved in cell proliferation.</text>
</comment>
<comment type="subunit">
    <text evidence="1">Component of the eukaryotic translation initiation factor 3 (eIF-3) complex.</text>
</comment>
<comment type="subcellular location">
    <subcellularLocation>
        <location evidence="1">Cytoplasm</location>
    </subcellularLocation>
</comment>
<comment type="disruption phenotype">
    <text evidence="3">Extended lifespan in adults.</text>
</comment>
<comment type="similarity">
    <text evidence="1">Belongs to the eIF-3 subunit F family.</text>
</comment>
<evidence type="ECO:0000255" key="1">
    <source>
        <dbReference type="HAMAP-Rule" id="MF_03005"/>
    </source>
</evidence>
<evidence type="ECO:0000255" key="2">
    <source>
        <dbReference type="PROSITE-ProRule" id="PRU01182"/>
    </source>
</evidence>
<evidence type="ECO:0000269" key="3">
    <source>
    </source>
</evidence>
<keyword id="KW-0963">Cytoplasm</keyword>
<keyword id="KW-0396">Initiation factor</keyword>
<keyword id="KW-0648">Protein biosynthesis</keyword>
<keyword id="KW-1185">Reference proteome</keyword>